<comment type="function">
    <text evidence="1">Binds directly to 16S ribosomal RNA.</text>
</comment>
<comment type="similarity">
    <text evidence="1">Belongs to the bacterial ribosomal protein bS20 family.</text>
</comment>
<comment type="sequence caution" evidence="2">
    <conflict type="erroneous initiation">
        <sequence resource="EMBL-CDS" id="AAP98711"/>
    </conflict>
</comment>
<dbReference type="EMBL" id="AE001363">
    <property type="protein sequence ID" value="AAD18892.1"/>
    <property type="molecule type" value="Genomic_DNA"/>
</dbReference>
<dbReference type="EMBL" id="AE002161">
    <property type="protein sequence ID" value="AAF38885.1"/>
    <property type="molecule type" value="Genomic_DNA"/>
</dbReference>
<dbReference type="EMBL" id="BA000008">
    <property type="protein sequence ID" value="BAA98962.1"/>
    <property type="molecule type" value="Genomic_DNA"/>
</dbReference>
<dbReference type="EMBL" id="AE009440">
    <property type="protein sequence ID" value="AAP98711.1"/>
    <property type="status" value="ALT_INIT"/>
    <property type="molecule type" value="Genomic_DNA"/>
</dbReference>
<dbReference type="PIR" id="C72039">
    <property type="entry name" value="C72039"/>
</dbReference>
<dbReference type="PIR" id="H86584">
    <property type="entry name" value="H86584"/>
</dbReference>
<dbReference type="RefSeq" id="NP_224949.1">
    <property type="nucleotide sequence ID" value="NC_000922.1"/>
</dbReference>
<dbReference type="RefSeq" id="WP_010883391.1">
    <property type="nucleotide sequence ID" value="NZ_LN847257.1"/>
</dbReference>
<dbReference type="SMR" id="Q9Z7F2"/>
<dbReference type="STRING" id="406984.CPK_ORF00160"/>
<dbReference type="GeneID" id="45050809"/>
<dbReference type="KEGG" id="cpa:CP_1118"/>
<dbReference type="KEGG" id="cpj:rs20"/>
<dbReference type="KEGG" id="cpn:CPn_0754"/>
<dbReference type="KEGG" id="cpt:CpB0782"/>
<dbReference type="PATRIC" id="fig|115713.3.peg.831"/>
<dbReference type="eggNOG" id="COG0268">
    <property type="taxonomic scope" value="Bacteria"/>
</dbReference>
<dbReference type="HOGENOM" id="CLU_160655_2_0_0"/>
<dbReference type="OMA" id="LNMASRT"/>
<dbReference type="OrthoDB" id="21589at2"/>
<dbReference type="Proteomes" id="UP000000583">
    <property type="component" value="Chromosome"/>
</dbReference>
<dbReference type="Proteomes" id="UP000000801">
    <property type="component" value="Chromosome"/>
</dbReference>
<dbReference type="GO" id="GO:0005829">
    <property type="term" value="C:cytosol"/>
    <property type="evidence" value="ECO:0007669"/>
    <property type="project" value="TreeGrafter"/>
</dbReference>
<dbReference type="GO" id="GO:0015935">
    <property type="term" value="C:small ribosomal subunit"/>
    <property type="evidence" value="ECO:0007669"/>
    <property type="project" value="TreeGrafter"/>
</dbReference>
<dbReference type="GO" id="GO:0070181">
    <property type="term" value="F:small ribosomal subunit rRNA binding"/>
    <property type="evidence" value="ECO:0007669"/>
    <property type="project" value="TreeGrafter"/>
</dbReference>
<dbReference type="GO" id="GO:0003735">
    <property type="term" value="F:structural constituent of ribosome"/>
    <property type="evidence" value="ECO:0007669"/>
    <property type="project" value="InterPro"/>
</dbReference>
<dbReference type="GO" id="GO:0006412">
    <property type="term" value="P:translation"/>
    <property type="evidence" value="ECO:0007669"/>
    <property type="project" value="UniProtKB-UniRule"/>
</dbReference>
<dbReference type="Gene3D" id="1.20.58.110">
    <property type="entry name" value="Ribosomal protein S20"/>
    <property type="match status" value="1"/>
</dbReference>
<dbReference type="HAMAP" id="MF_00500">
    <property type="entry name" value="Ribosomal_bS20"/>
    <property type="match status" value="1"/>
</dbReference>
<dbReference type="InterPro" id="IPR002583">
    <property type="entry name" value="Ribosomal_bS20"/>
</dbReference>
<dbReference type="InterPro" id="IPR036510">
    <property type="entry name" value="Ribosomal_bS20_sf"/>
</dbReference>
<dbReference type="NCBIfam" id="TIGR00029">
    <property type="entry name" value="S20"/>
    <property type="match status" value="1"/>
</dbReference>
<dbReference type="PANTHER" id="PTHR33398">
    <property type="entry name" value="30S RIBOSOMAL PROTEIN S20"/>
    <property type="match status" value="1"/>
</dbReference>
<dbReference type="PANTHER" id="PTHR33398:SF1">
    <property type="entry name" value="SMALL RIBOSOMAL SUBUNIT PROTEIN BS20C"/>
    <property type="match status" value="1"/>
</dbReference>
<dbReference type="Pfam" id="PF01649">
    <property type="entry name" value="Ribosomal_S20p"/>
    <property type="match status" value="1"/>
</dbReference>
<dbReference type="SUPFAM" id="SSF46992">
    <property type="entry name" value="Ribosomal protein S20"/>
    <property type="match status" value="1"/>
</dbReference>
<proteinExistence type="inferred from homology"/>
<sequence>MAPKKPNKKNVIQRRPSAEKRILTAQKRELINHSFKSKVKTIVKKFEASLKLDDTQATLSNLQSVYSVVDKAVKRGIFKDNKAARIKSKATLKVNARAS</sequence>
<protein>
    <recommendedName>
        <fullName evidence="1">Small ribosomal subunit protein bS20</fullName>
    </recommendedName>
    <alternativeName>
        <fullName evidence="2">30S ribosomal protein S20</fullName>
    </alternativeName>
</protein>
<name>RS20_CHLPN</name>
<evidence type="ECO:0000255" key="1">
    <source>
        <dbReference type="HAMAP-Rule" id="MF_00500"/>
    </source>
</evidence>
<evidence type="ECO:0000305" key="2"/>
<keyword id="KW-0687">Ribonucleoprotein</keyword>
<keyword id="KW-0689">Ribosomal protein</keyword>
<keyword id="KW-0694">RNA-binding</keyword>
<keyword id="KW-0699">rRNA-binding</keyword>
<accession>Q9Z7F2</accession>
<accession>Q9JQ75</accession>
<reference key="1">
    <citation type="journal article" date="1999" name="Nat. Genet.">
        <title>Comparative genomes of Chlamydia pneumoniae and C. trachomatis.</title>
        <authorList>
            <person name="Kalman S."/>
            <person name="Mitchell W.P."/>
            <person name="Marathe R."/>
            <person name="Lammel C.J."/>
            <person name="Fan J."/>
            <person name="Hyman R.W."/>
            <person name="Olinger L."/>
            <person name="Grimwood J."/>
            <person name="Davis R.W."/>
            <person name="Stephens R.S."/>
        </authorList>
    </citation>
    <scope>NUCLEOTIDE SEQUENCE [LARGE SCALE GENOMIC DNA]</scope>
    <source>
        <strain>CWL029</strain>
    </source>
</reference>
<reference key="2">
    <citation type="journal article" date="2000" name="Nucleic Acids Res.">
        <title>Genome sequences of Chlamydia trachomatis MoPn and Chlamydia pneumoniae AR39.</title>
        <authorList>
            <person name="Read T.D."/>
            <person name="Brunham R.C."/>
            <person name="Shen C."/>
            <person name="Gill S.R."/>
            <person name="Heidelberg J.F."/>
            <person name="White O."/>
            <person name="Hickey E.K."/>
            <person name="Peterson J.D."/>
            <person name="Utterback T.R."/>
            <person name="Berry K.J."/>
            <person name="Bass S."/>
            <person name="Linher K.D."/>
            <person name="Weidman J.F."/>
            <person name="Khouri H.M."/>
            <person name="Craven B."/>
            <person name="Bowman C."/>
            <person name="Dodson R.J."/>
            <person name="Gwinn M.L."/>
            <person name="Nelson W.C."/>
            <person name="DeBoy R.T."/>
            <person name="Kolonay J.F."/>
            <person name="McClarty G."/>
            <person name="Salzberg S.L."/>
            <person name="Eisen J.A."/>
            <person name="Fraser C.M."/>
        </authorList>
    </citation>
    <scope>NUCLEOTIDE SEQUENCE [LARGE SCALE GENOMIC DNA]</scope>
    <source>
        <strain>AR39</strain>
    </source>
</reference>
<reference key="3">
    <citation type="journal article" date="2000" name="Nucleic Acids Res.">
        <title>Comparison of whole genome sequences of Chlamydia pneumoniae J138 from Japan and CWL029 from USA.</title>
        <authorList>
            <person name="Shirai M."/>
            <person name="Hirakawa H."/>
            <person name="Kimoto M."/>
            <person name="Tabuchi M."/>
            <person name="Kishi F."/>
            <person name="Ouchi K."/>
            <person name="Shiba T."/>
            <person name="Ishii K."/>
            <person name="Hattori M."/>
            <person name="Kuhara S."/>
            <person name="Nakazawa T."/>
        </authorList>
    </citation>
    <scope>NUCLEOTIDE SEQUENCE [LARGE SCALE GENOMIC DNA]</scope>
    <source>
        <strain>J138</strain>
    </source>
</reference>
<reference key="4">
    <citation type="submission" date="2002-05" db="EMBL/GenBank/DDBJ databases">
        <title>The genome sequence of Chlamydia pneumoniae TW183 and comparison with other Chlamydia strains based on whole genome sequence analysis.</title>
        <authorList>
            <person name="Geng M.M."/>
            <person name="Schuhmacher A."/>
            <person name="Muehldorfer I."/>
            <person name="Bensch K.W."/>
            <person name="Schaefer K.P."/>
            <person name="Schneider S."/>
            <person name="Pohl T."/>
            <person name="Essig A."/>
            <person name="Marre R."/>
            <person name="Melchers K."/>
        </authorList>
    </citation>
    <scope>NUCLEOTIDE SEQUENCE [LARGE SCALE GENOMIC DNA]</scope>
    <source>
        <strain>TW-183</strain>
    </source>
</reference>
<feature type="chain" id="PRO_0000167945" description="Small ribosomal subunit protein bS20">
    <location>
        <begin position="1"/>
        <end position="99"/>
    </location>
</feature>
<gene>
    <name evidence="1" type="primary">rpsT</name>
    <name type="synonym">rs20</name>
    <name type="ordered locus">CPn_0754</name>
    <name type="ordered locus">CP_1118</name>
    <name type="ordered locus">CpB0782</name>
</gene>
<organism>
    <name type="scientific">Chlamydia pneumoniae</name>
    <name type="common">Chlamydophila pneumoniae</name>
    <dbReference type="NCBI Taxonomy" id="83558"/>
    <lineage>
        <taxon>Bacteria</taxon>
        <taxon>Pseudomonadati</taxon>
        <taxon>Chlamydiota</taxon>
        <taxon>Chlamydiia</taxon>
        <taxon>Chlamydiales</taxon>
        <taxon>Chlamydiaceae</taxon>
        <taxon>Chlamydia/Chlamydophila group</taxon>
        <taxon>Chlamydia</taxon>
    </lineage>
</organism>